<keyword id="KW-0687">Ribonucleoprotein</keyword>
<keyword id="KW-0689">Ribosomal protein</keyword>
<keyword id="KW-0694">RNA-binding</keyword>
<keyword id="KW-0699">rRNA-binding</keyword>
<evidence type="ECO:0000255" key="1">
    <source>
        <dbReference type="HAMAP-Rule" id="MF_01331"/>
    </source>
</evidence>
<evidence type="ECO:0000305" key="2"/>
<protein>
    <recommendedName>
        <fullName evidence="1">Large ribosomal subunit protein uL22</fullName>
    </recommendedName>
    <alternativeName>
        <fullName evidence="2">50S ribosomal protein L22</fullName>
    </alternativeName>
</protein>
<reference key="1">
    <citation type="journal article" date="2001" name="Lancet">
        <title>Whole genome sequencing of meticillin-resistant Staphylococcus aureus.</title>
        <authorList>
            <person name="Kuroda M."/>
            <person name="Ohta T."/>
            <person name="Uchiyama I."/>
            <person name="Baba T."/>
            <person name="Yuzawa H."/>
            <person name="Kobayashi I."/>
            <person name="Cui L."/>
            <person name="Oguchi A."/>
            <person name="Aoki K."/>
            <person name="Nagai Y."/>
            <person name="Lian J.-Q."/>
            <person name="Ito T."/>
            <person name="Kanamori M."/>
            <person name="Matsumaru H."/>
            <person name="Maruyama A."/>
            <person name="Murakami H."/>
            <person name="Hosoyama A."/>
            <person name="Mizutani-Ui Y."/>
            <person name="Takahashi N.K."/>
            <person name="Sawano T."/>
            <person name="Inoue R."/>
            <person name="Kaito C."/>
            <person name="Sekimizu K."/>
            <person name="Hirakawa H."/>
            <person name="Kuhara S."/>
            <person name="Goto S."/>
            <person name="Yabuzaki J."/>
            <person name="Kanehisa M."/>
            <person name="Yamashita A."/>
            <person name="Oshima K."/>
            <person name="Furuya K."/>
            <person name="Yoshino C."/>
            <person name="Shiba T."/>
            <person name="Hattori M."/>
            <person name="Ogasawara N."/>
            <person name="Hayashi H."/>
            <person name="Hiramatsu K."/>
        </authorList>
    </citation>
    <scope>NUCLEOTIDE SEQUENCE [LARGE SCALE GENOMIC DNA]</scope>
    <source>
        <strain>N315</strain>
    </source>
</reference>
<reference key="2">
    <citation type="submission" date="2007-10" db="UniProtKB">
        <title>Shotgun proteomic analysis of total and membrane protein extracts of S. aureus strain N315.</title>
        <authorList>
            <person name="Vaezzadeh A.R."/>
            <person name="Deshusses J."/>
            <person name="Lescuyer P."/>
            <person name="Hochstrasser D.F."/>
        </authorList>
    </citation>
    <scope>IDENTIFICATION BY MASS SPECTROMETRY [LARGE SCALE ANALYSIS]</scope>
    <source>
        <strain>N315</strain>
    </source>
</reference>
<organism>
    <name type="scientific">Staphylococcus aureus (strain N315)</name>
    <dbReference type="NCBI Taxonomy" id="158879"/>
    <lineage>
        <taxon>Bacteria</taxon>
        <taxon>Bacillati</taxon>
        <taxon>Bacillota</taxon>
        <taxon>Bacilli</taxon>
        <taxon>Bacillales</taxon>
        <taxon>Staphylococcaceae</taxon>
        <taxon>Staphylococcus</taxon>
    </lineage>
</organism>
<gene>
    <name evidence="1" type="primary">rplV</name>
    <name type="ordered locus">SA2042</name>
</gene>
<sequence length="117" mass="12835">MEAKAVARTIRIAPRKVRLVLDLIRGKNAAEAIAILKLTNKASSPVIEKVLMSALANAEHNYDMNTDELVVKEAYANEGPTLKRFRPRAQGRASAINKRTSHITIVVSDGKEEAKEA</sequence>
<dbReference type="EMBL" id="BA000018">
    <property type="protein sequence ID" value="BAB43337.1"/>
    <property type="molecule type" value="Genomic_DNA"/>
</dbReference>
<dbReference type="PIR" id="H90021">
    <property type="entry name" value="H90021"/>
</dbReference>
<dbReference type="RefSeq" id="WP_000387527.1">
    <property type="nucleotide sequence ID" value="NC_002745.2"/>
</dbReference>
<dbReference type="SMR" id="Q7A460"/>
<dbReference type="EnsemblBacteria" id="BAB43337">
    <property type="protein sequence ID" value="BAB43337"/>
    <property type="gene ID" value="BAB43337"/>
</dbReference>
<dbReference type="GeneID" id="98346557"/>
<dbReference type="KEGG" id="sau:SA2042"/>
<dbReference type="HOGENOM" id="CLU_083987_3_3_9"/>
<dbReference type="GO" id="GO:0022625">
    <property type="term" value="C:cytosolic large ribosomal subunit"/>
    <property type="evidence" value="ECO:0007669"/>
    <property type="project" value="TreeGrafter"/>
</dbReference>
<dbReference type="GO" id="GO:0019843">
    <property type="term" value="F:rRNA binding"/>
    <property type="evidence" value="ECO:0007669"/>
    <property type="project" value="UniProtKB-UniRule"/>
</dbReference>
<dbReference type="GO" id="GO:0003735">
    <property type="term" value="F:structural constituent of ribosome"/>
    <property type="evidence" value="ECO:0007669"/>
    <property type="project" value="InterPro"/>
</dbReference>
<dbReference type="GO" id="GO:0006412">
    <property type="term" value="P:translation"/>
    <property type="evidence" value="ECO:0007669"/>
    <property type="project" value="UniProtKB-UniRule"/>
</dbReference>
<dbReference type="CDD" id="cd00336">
    <property type="entry name" value="Ribosomal_L22"/>
    <property type="match status" value="1"/>
</dbReference>
<dbReference type="FunFam" id="3.90.470.10:FF:000001">
    <property type="entry name" value="50S ribosomal protein L22"/>
    <property type="match status" value="1"/>
</dbReference>
<dbReference type="Gene3D" id="3.90.470.10">
    <property type="entry name" value="Ribosomal protein L22/L17"/>
    <property type="match status" value="1"/>
</dbReference>
<dbReference type="HAMAP" id="MF_01331_B">
    <property type="entry name" value="Ribosomal_uL22_B"/>
    <property type="match status" value="1"/>
</dbReference>
<dbReference type="InterPro" id="IPR001063">
    <property type="entry name" value="Ribosomal_uL22"/>
</dbReference>
<dbReference type="InterPro" id="IPR005727">
    <property type="entry name" value="Ribosomal_uL22_bac/chlpt-type"/>
</dbReference>
<dbReference type="InterPro" id="IPR047867">
    <property type="entry name" value="Ribosomal_uL22_bac/org-type"/>
</dbReference>
<dbReference type="InterPro" id="IPR018260">
    <property type="entry name" value="Ribosomal_uL22_CS"/>
</dbReference>
<dbReference type="InterPro" id="IPR036394">
    <property type="entry name" value="Ribosomal_uL22_sf"/>
</dbReference>
<dbReference type="NCBIfam" id="TIGR01044">
    <property type="entry name" value="rplV_bact"/>
    <property type="match status" value="1"/>
</dbReference>
<dbReference type="PANTHER" id="PTHR13501">
    <property type="entry name" value="CHLOROPLAST 50S RIBOSOMAL PROTEIN L22-RELATED"/>
    <property type="match status" value="1"/>
</dbReference>
<dbReference type="PANTHER" id="PTHR13501:SF8">
    <property type="entry name" value="LARGE RIBOSOMAL SUBUNIT PROTEIN UL22M"/>
    <property type="match status" value="1"/>
</dbReference>
<dbReference type="Pfam" id="PF00237">
    <property type="entry name" value="Ribosomal_L22"/>
    <property type="match status" value="1"/>
</dbReference>
<dbReference type="SUPFAM" id="SSF54843">
    <property type="entry name" value="Ribosomal protein L22"/>
    <property type="match status" value="1"/>
</dbReference>
<dbReference type="PROSITE" id="PS00464">
    <property type="entry name" value="RIBOSOMAL_L22"/>
    <property type="match status" value="1"/>
</dbReference>
<accession>Q7A460</accession>
<proteinExistence type="evidence at protein level"/>
<comment type="function">
    <text evidence="1">This protein binds specifically to 23S rRNA; its binding is stimulated by other ribosomal proteins, e.g. L4, L17, and L20. It is important during the early stages of 50S assembly. It makes multiple contacts with different domains of the 23S rRNA in the assembled 50S subunit and ribosome (By similarity).</text>
</comment>
<comment type="function">
    <text evidence="1">The globular domain of the protein is located near the polypeptide exit tunnel on the outside of the subunit, while an extended beta-hairpin is found that lines the wall of the exit tunnel in the center of the 70S ribosome.</text>
</comment>
<comment type="subunit">
    <text evidence="1">Part of the 50S ribosomal subunit.</text>
</comment>
<comment type="similarity">
    <text evidence="1">Belongs to the universal ribosomal protein uL22 family.</text>
</comment>
<feature type="chain" id="PRO_0000125223" description="Large ribosomal subunit protein uL22">
    <location>
        <begin position="1"/>
        <end position="117"/>
    </location>
</feature>
<name>RL22_STAAN</name>